<name>IBPB_PECCP</name>
<reference key="1">
    <citation type="submission" date="2009-07" db="EMBL/GenBank/DDBJ databases">
        <title>Complete sequence of Pectobacterium carotovorum subsp. carotovorum PC1.</title>
        <authorList>
            <consortium name="US DOE Joint Genome Institute"/>
            <person name="Lucas S."/>
            <person name="Copeland A."/>
            <person name="Lapidus A."/>
            <person name="Glavina del Rio T."/>
            <person name="Tice H."/>
            <person name="Bruce D."/>
            <person name="Goodwin L."/>
            <person name="Pitluck S."/>
            <person name="Munk A.C."/>
            <person name="Brettin T."/>
            <person name="Detter J.C."/>
            <person name="Han C."/>
            <person name="Tapia R."/>
            <person name="Larimer F."/>
            <person name="Land M."/>
            <person name="Hauser L."/>
            <person name="Kyrpides N."/>
            <person name="Mikhailova N."/>
            <person name="Balakrishnan V."/>
            <person name="Glasner J."/>
            <person name="Perna N.T."/>
        </authorList>
    </citation>
    <scope>NUCLEOTIDE SEQUENCE [LARGE SCALE GENOMIC DNA]</scope>
    <source>
        <strain>PC1</strain>
    </source>
</reference>
<protein>
    <recommendedName>
        <fullName evidence="1">Small heat shock protein IbpB</fullName>
    </recommendedName>
    <alternativeName>
        <fullName evidence="1">16 kDa heat shock protein B</fullName>
    </alternativeName>
</protein>
<comment type="function">
    <text evidence="1">Associates with aggregated proteins, together with IbpA, to stabilize and protect them from irreversible denaturation and extensive proteolysis during heat shock and oxidative stress. Aggregated proteins bound to the IbpAB complex are more efficiently refolded and reactivated by the ATP-dependent chaperone systems ClpB and DnaK/DnaJ/GrpE. Its activity is ATP-independent.</text>
</comment>
<comment type="subunit">
    <text evidence="1">Homodimer. Forms homomultimers of about 100-150 subunits at optimal growth temperatures. Conformation changes to oligomers at high temperatures or high ionic concentrations. The decrease in size of the multimers is accompanied by an increase in chaperone activity.</text>
</comment>
<comment type="subcellular location">
    <subcellularLocation>
        <location evidence="1">Cytoplasm</location>
    </subcellularLocation>
</comment>
<comment type="domain">
    <text evidence="1">The N- and C-terminal flexible termini are involved in oligomerization and in the binding of non-native substrate proteins, and are essential for chaperone activity.</text>
</comment>
<comment type="similarity">
    <text evidence="1 2">Belongs to the small heat shock protein (HSP20) family.</text>
</comment>
<organism>
    <name type="scientific">Pectobacterium carotovorum subsp. carotovorum (strain PC1)</name>
    <dbReference type="NCBI Taxonomy" id="561230"/>
    <lineage>
        <taxon>Bacteria</taxon>
        <taxon>Pseudomonadati</taxon>
        <taxon>Pseudomonadota</taxon>
        <taxon>Gammaproteobacteria</taxon>
        <taxon>Enterobacterales</taxon>
        <taxon>Pectobacteriaceae</taxon>
        <taxon>Pectobacterium</taxon>
    </lineage>
</organism>
<keyword id="KW-0143">Chaperone</keyword>
<keyword id="KW-0963">Cytoplasm</keyword>
<keyword id="KW-0346">Stress response</keyword>
<feature type="chain" id="PRO_1000216230" description="Small heat shock protein IbpB">
    <location>
        <begin position="1"/>
        <end position="149"/>
    </location>
</feature>
<feature type="domain" description="sHSP" evidence="2">
    <location>
        <begin position="26"/>
        <end position="137"/>
    </location>
</feature>
<proteinExistence type="inferred from homology"/>
<evidence type="ECO:0000255" key="1">
    <source>
        <dbReference type="HAMAP-Rule" id="MF_02001"/>
    </source>
</evidence>
<evidence type="ECO:0000255" key="2">
    <source>
        <dbReference type="PROSITE-ProRule" id="PRU00285"/>
    </source>
</evidence>
<gene>
    <name evidence="1" type="primary">ibpB</name>
    <name type="ordered locus">PC1_0035</name>
</gene>
<dbReference type="EMBL" id="CP001657">
    <property type="protein sequence ID" value="ACT11098.1"/>
    <property type="molecule type" value="Genomic_DNA"/>
</dbReference>
<dbReference type="RefSeq" id="WP_012772780.1">
    <property type="nucleotide sequence ID" value="NC_012917.1"/>
</dbReference>
<dbReference type="SMR" id="C6DGL1"/>
<dbReference type="STRING" id="561230.PC1_0035"/>
<dbReference type="KEGG" id="pct:PC1_0035"/>
<dbReference type="eggNOG" id="COG0071">
    <property type="taxonomic scope" value="Bacteria"/>
</dbReference>
<dbReference type="HOGENOM" id="CLU_046737_4_2_6"/>
<dbReference type="OrthoDB" id="6871152at2"/>
<dbReference type="Proteomes" id="UP000002736">
    <property type="component" value="Chromosome"/>
</dbReference>
<dbReference type="GO" id="GO:0005737">
    <property type="term" value="C:cytoplasm"/>
    <property type="evidence" value="ECO:0007669"/>
    <property type="project" value="UniProtKB-SubCell"/>
</dbReference>
<dbReference type="GO" id="GO:0050821">
    <property type="term" value="P:protein stabilization"/>
    <property type="evidence" value="ECO:0007669"/>
    <property type="project" value="UniProtKB-UniRule"/>
</dbReference>
<dbReference type="CDD" id="cd06470">
    <property type="entry name" value="ACD_IbpA-B_like"/>
    <property type="match status" value="1"/>
</dbReference>
<dbReference type="Gene3D" id="2.60.40.790">
    <property type="match status" value="1"/>
</dbReference>
<dbReference type="HAMAP" id="MF_02001">
    <property type="entry name" value="HSP20_IbpB"/>
    <property type="match status" value="1"/>
</dbReference>
<dbReference type="InterPro" id="IPR002068">
    <property type="entry name" value="A-crystallin/Hsp20_dom"/>
</dbReference>
<dbReference type="InterPro" id="IPR037913">
    <property type="entry name" value="ACD_IbpA/B"/>
</dbReference>
<dbReference type="InterPro" id="IPR008978">
    <property type="entry name" value="HSP20-like_chaperone"/>
</dbReference>
<dbReference type="InterPro" id="IPR022848">
    <property type="entry name" value="HSP20_IbpB"/>
</dbReference>
<dbReference type="NCBIfam" id="NF008618">
    <property type="entry name" value="PRK11597.1"/>
    <property type="match status" value="1"/>
</dbReference>
<dbReference type="PANTHER" id="PTHR47062">
    <property type="match status" value="1"/>
</dbReference>
<dbReference type="PANTHER" id="PTHR47062:SF2">
    <property type="entry name" value="SMALL HEAT SHOCK PROTEIN IBPB"/>
    <property type="match status" value="1"/>
</dbReference>
<dbReference type="Pfam" id="PF00011">
    <property type="entry name" value="HSP20"/>
    <property type="match status" value="1"/>
</dbReference>
<dbReference type="SUPFAM" id="SSF49764">
    <property type="entry name" value="HSP20-like chaperones"/>
    <property type="match status" value="1"/>
</dbReference>
<dbReference type="PROSITE" id="PS01031">
    <property type="entry name" value="SHSP"/>
    <property type="match status" value="1"/>
</dbReference>
<sequence length="149" mass="16699">MRNYDLSPLLRQWIGFDKLASSMQGSQEPIDFPPYNIEKKDDNHYRITLALAGFRQSDLDIEVEGPRLTVKGSPAPTEKAVEYLHQGLVFKPFTLSFTLAEHLHVSDAHFENGLLHIDLVRDVPEALQPQRIAIGGGRPALNQQPAEDA</sequence>
<accession>C6DGL1</accession>